<keyword id="KW-0997">Cell inner membrane</keyword>
<keyword id="KW-1003">Cell membrane</keyword>
<keyword id="KW-0963">Cytoplasm</keyword>
<keyword id="KW-0342">GTP-binding</keyword>
<keyword id="KW-0472">Membrane</keyword>
<keyword id="KW-0547">Nucleotide-binding</keyword>
<keyword id="KW-0690">Ribosome biogenesis</keyword>
<keyword id="KW-0694">RNA-binding</keyword>
<keyword id="KW-0699">rRNA-binding</keyword>
<reference key="1">
    <citation type="journal article" date="2008" name="Genome Res.">
        <title>Comparative genome analysis of Salmonella enteritidis PT4 and Salmonella gallinarum 287/91 provides insights into evolutionary and host adaptation pathways.</title>
        <authorList>
            <person name="Thomson N.R."/>
            <person name="Clayton D.J."/>
            <person name="Windhorst D."/>
            <person name="Vernikos G."/>
            <person name="Davidson S."/>
            <person name="Churcher C."/>
            <person name="Quail M.A."/>
            <person name="Stevens M."/>
            <person name="Jones M.A."/>
            <person name="Watson M."/>
            <person name="Barron A."/>
            <person name="Layton A."/>
            <person name="Pickard D."/>
            <person name="Kingsley R.A."/>
            <person name="Bignell A."/>
            <person name="Clark L."/>
            <person name="Harris B."/>
            <person name="Ormond D."/>
            <person name="Abdellah Z."/>
            <person name="Brooks K."/>
            <person name="Cherevach I."/>
            <person name="Chillingworth T."/>
            <person name="Woodward J."/>
            <person name="Norberczak H."/>
            <person name="Lord A."/>
            <person name="Arrowsmith C."/>
            <person name="Jagels K."/>
            <person name="Moule S."/>
            <person name="Mungall K."/>
            <person name="Saunders M."/>
            <person name="Whitehead S."/>
            <person name="Chabalgoity J.A."/>
            <person name="Maskell D."/>
            <person name="Humphreys T."/>
            <person name="Roberts M."/>
            <person name="Barrow P.A."/>
            <person name="Dougan G."/>
            <person name="Parkhill J."/>
        </authorList>
    </citation>
    <scope>NUCLEOTIDE SEQUENCE [LARGE SCALE GENOMIC DNA]</scope>
    <source>
        <strain>287/91 / NCTC 13346</strain>
    </source>
</reference>
<gene>
    <name evidence="1" type="primary">era</name>
    <name type="ordered locus">SG2617</name>
</gene>
<comment type="function">
    <text evidence="1">An essential GTPase that binds both GDP and GTP, with rapid nucleotide exchange. Plays a role in 16S rRNA processing and 30S ribosomal subunit biogenesis and possibly also in cell cycle regulation and energy metabolism.</text>
</comment>
<comment type="subunit">
    <text evidence="1">Monomer.</text>
</comment>
<comment type="subcellular location">
    <subcellularLocation>
        <location>Cytoplasm</location>
    </subcellularLocation>
    <subcellularLocation>
        <location evidence="1">Cell inner membrane</location>
        <topology evidence="1">Peripheral membrane protein</topology>
    </subcellularLocation>
</comment>
<comment type="similarity">
    <text evidence="1 2">Belongs to the TRAFAC class TrmE-Era-EngA-EngB-Septin-like GTPase superfamily. Era GTPase family.</text>
</comment>
<dbReference type="EMBL" id="AM933173">
    <property type="protein sequence ID" value="CAR38434.1"/>
    <property type="molecule type" value="Genomic_DNA"/>
</dbReference>
<dbReference type="RefSeq" id="WP_000102230.1">
    <property type="nucleotide sequence ID" value="NC_011274.1"/>
</dbReference>
<dbReference type="SMR" id="B5RD48"/>
<dbReference type="KEGG" id="seg:SG2617"/>
<dbReference type="HOGENOM" id="CLU_038009_1_2_6"/>
<dbReference type="Proteomes" id="UP000008321">
    <property type="component" value="Chromosome"/>
</dbReference>
<dbReference type="GO" id="GO:0005829">
    <property type="term" value="C:cytosol"/>
    <property type="evidence" value="ECO:0007669"/>
    <property type="project" value="TreeGrafter"/>
</dbReference>
<dbReference type="GO" id="GO:0005886">
    <property type="term" value="C:plasma membrane"/>
    <property type="evidence" value="ECO:0007669"/>
    <property type="project" value="UniProtKB-SubCell"/>
</dbReference>
<dbReference type="GO" id="GO:0005525">
    <property type="term" value="F:GTP binding"/>
    <property type="evidence" value="ECO:0007669"/>
    <property type="project" value="UniProtKB-UniRule"/>
</dbReference>
<dbReference type="GO" id="GO:0003924">
    <property type="term" value="F:GTPase activity"/>
    <property type="evidence" value="ECO:0007669"/>
    <property type="project" value="UniProtKB-UniRule"/>
</dbReference>
<dbReference type="GO" id="GO:0043024">
    <property type="term" value="F:ribosomal small subunit binding"/>
    <property type="evidence" value="ECO:0007669"/>
    <property type="project" value="TreeGrafter"/>
</dbReference>
<dbReference type="GO" id="GO:0070181">
    <property type="term" value="F:small ribosomal subunit rRNA binding"/>
    <property type="evidence" value="ECO:0007669"/>
    <property type="project" value="UniProtKB-UniRule"/>
</dbReference>
<dbReference type="GO" id="GO:0000028">
    <property type="term" value="P:ribosomal small subunit assembly"/>
    <property type="evidence" value="ECO:0007669"/>
    <property type="project" value="TreeGrafter"/>
</dbReference>
<dbReference type="CDD" id="cd04163">
    <property type="entry name" value="Era"/>
    <property type="match status" value="1"/>
</dbReference>
<dbReference type="CDD" id="cd22534">
    <property type="entry name" value="KH-II_Era"/>
    <property type="match status" value="1"/>
</dbReference>
<dbReference type="FunFam" id="3.30.300.20:FF:000003">
    <property type="entry name" value="GTPase Era"/>
    <property type="match status" value="1"/>
</dbReference>
<dbReference type="FunFam" id="3.40.50.300:FF:000094">
    <property type="entry name" value="GTPase Era"/>
    <property type="match status" value="1"/>
</dbReference>
<dbReference type="Gene3D" id="3.30.300.20">
    <property type="match status" value="1"/>
</dbReference>
<dbReference type="Gene3D" id="3.40.50.300">
    <property type="entry name" value="P-loop containing nucleotide triphosphate hydrolases"/>
    <property type="match status" value="1"/>
</dbReference>
<dbReference type="HAMAP" id="MF_00367">
    <property type="entry name" value="GTPase_Era"/>
    <property type="match status" value="1"/>
</dbReference>
<dbReference type="InterPro" id="IPR030388">
    <property type="entry name" value="G_ERA_dom"/>
</dbReference>
<dbReference type="InterPro" id="IPR006073">
    <property type="entry name" value="GTP-bd"/>
</dbReference>
<dbReference type="InterPro" id="IPR005662">
    <property type="entry name" value="GTPase_Era-like"/>
</dbReference>
<dbReference type="InterPro" id="IPR015946">
    <property type="entry name" value="KH_dom-like_a/b"/>
</dbReference>
<dbReference type="InterPro" id="IPR004044">
    <property type="entry name" value="KH_dom_type_2"/>
</dbReference>
<dbReference type="InterPro" id="IPR009019">
    <property type="entry name" value="KH_sf_prok-type"/>
</dbReference>
<dbReference type="InterPro" id="IPR027417">
    <property type="entry name" value="P-loop_NTPase"/>
</dbReference>
<dbReference type="InterPro" id="IPR005225">
    <property type="entry name" value="Small_GTP-bd"/>
</dbReference>
<dbReference type="NCBIfam" id="TIGR00436">
    <property type="entry name" value="era"/>
    <property type="match status" value="1"/>
</dbReference>
<dbReference type="NCBIfam" id="NF000908">
    <property type="entry name" value="PRK00089.1"/>
    <property type="match status" value="1"/>
</dbReference>
<dbReference type="NCBIfam" id="TIGR00231">
    <property type="entry name" value="small_GTP"/>
    <property type="match status" value="1"/>
</dbReference>
<dbReference type="PANTHER" id="PTHR42698">
    <property type="entry name" value="GTPASE ERA"/>
    <property type="match status" value="1"/>
</dbReference>
<dbReference type="PANTHER" id="PTHR42698:SF1">
    <property type="entry name" value="GTPASE ERA, MITOCHONDRIAL"/>
    <property type="match status" value="1"/>
</dbReference>
<dbReference type="Pfam" id="PF07650">
    <property type="entry name" value="KH_2"/>
    <property type="match status" value="1"/>
</dbReference>
<dbReference type="Pfam" id="PF01926">
    <property type="entry name" value="MMR_HSR1"/>
    <property type="match status" value="1"/>
</dbReference>
<dbReference type="SUPFAM" id="SSF52540">
    <property type="entry name" value="P-loop containing nucleoside triphosphate hydrolases"/>
    <property type="match status" value="1"/>
</dbReference>
<dbReference type="SUPFAM" id="SSF54814">
    <property type="entry name" value="Prokaryotic type KH domain (KH-domain type II)"/>
    <property type="match status" value="1"/>
</dbReference>
<dbReference type="PROSITE" id="PS51713">
    <property type="entry name" value="G_ERA"/>
    <property type="match status" value="1"/>
</dbReference>
<dbReference type="PROSITE" id="PS50823">
    <property type="entry name" value="KH_TYPE_2"/>
    <property type="match status" value="1"/>
</dbReference>
<feature type="chain" id="PRO_1000121350" description="GTPase Era">
    <location>
        <begin position="1"/>
        <end position="301"/>
    </location>
</feature>
<feature type="domain" description="Era-type G" evidence="2">
    <location>
        <begin position="7"/>
        <end position="175"/>
    </location>
</feature>
<feature type="domain" description="KH type-2" evidence="1">
    <location>
        <begin position="206"/>
        <end position="283"/>
    </location>
</feature>
<feature type="region of interest" description="G1" evidence="2">
    <location>
        <begin position="15"/>
        <end position="22"/>
    </location>
</feature>
<feature type="region of interest" description="G2" evidence="2">
    <location>
        <begin position="41"/>
        <end position="45"/>
    </location>
</feature>
<feature type="region of interest" description="G3" evidence="2">
    <location>
        <begin position="62"/>
        <end position="65"/>
    </location>
</feature>
<feature type="region of interest" description="G4" evidence="2">
    <location>
        <begin position="124"/>
        <end position="127"/>
    </location>
</feature>
<feature type="region of interest" description="G5" evidence="2">
    <location>
        <begin position="154"/>
        <end position="156"/>
    </location>
</feature>
<feature type="binding site" evidence="1">
    <location>
        <begin position="15"/>
        <end position="22"/>
    </location>
    <ligand>
        <name>GTP</name>
        <dbReference type="ChEBI" id="CHEBI:37565"/>
    </ligand>
</feature>
<feature type="binding site" evidence="1">
    <location>
        <begin position="62"/>
        <end position="66"/>
    </location>
    <ligand>
        <name>GTP</name>
        <dbReference type="ChEBI" id="CHEBI:37565"/>
    </ligand>
</feature>
<feature type="binding site" evidence="1">
    <location>
        <begin position="124"/>
        <end position="127"/>
    </location>
    <ligand>
        <name>GTP</name>
        <dbReference type="ChEBI" id="CHEBI:37565"/>
    </ligand>
</feature>
<accession>B5RD48</accession>
<proteinExistence type="inferred from homology"/>
<name>ERA_SALG2</name>
<protein>
    <recommendedName>
        <fullName evidence="1">GTPase Era</fullName>
    </recommendedName>
</protein>
<evidence type="ECO:0000255" key="1">
    <source>
        <dbReference type="HAMAP-Rule" id="MF_00367"/>
    </source>
</evidence>
<evidence type="ECO:0000255" key="2">
    <source>
        <dbReference type="PROSITE-ProRule" id="PRU01050"/>
    </source>
</evidence>
<sequence>MSTDKTYCGFIAIVGRPNVGKSTLLNKLLGQKISITSRKAQTTRHRIVGIHTEGPYQAIYVDTPGLHMEEKRAINRLMNKAASSSIGDVELVIFVVEGTRWTPDDEMVLNKLRDGKAPVILAVNKVDNVQEKADLLPHLQFLASQMNFLDIVPISAETGMNVDTIAGIVRKHLPEAIHHFPEDYITDRSQRFMASEIIREKLMRFLGAELPYSVTVEIERFVTNERGGYDINGLILVEREGQKKMVIGNKGAKIKTIGIEARKDMQEMFEAPVHLELWVKVKSGWADDERALRSLGYVDDL</sequence>
<organism>
    <name type="scientific">Salmonella gallinarum (strain 287/91 / NCTC 13346)</name>
    <dbReference type="NCBI Taxonomy" id="550538"/>
    <lineage>
        <taxon>Bacteria</taxon>
        <taxon>Pseudomonadati</taxon>
        <taxon>Pseudomonadota</taxon>
        <taxon>Gammaproteobacteria</taxon>
        <taxon>Enterobacterales</taxon>
        <taxon>Enterobacteriaceae</taxon>
        <taxon>Salmonella</taxon>
    </lineage>
</organism>